<sequence>MNSSIAILLVMALIMFSLDKSYSTDDESGNKCAKTKRRENVCRVCGNRSGNDEYYSECCESDYRYHRCLDLLRN</sequence>
<keyword id="KW-0002">3D-structure</keyword>
<keyword id="KW-0903">Direct protein sequencing</keyword>
<keyword id="KW-1015">Disulfide bond</keyword>
<keyword id="KW-0872">Ion channel impairing toxin</keyword>
<keyword id="KW-0528">Neurotoxin</keyword>
<keyword id="KW-0632">Potassium channel impairing toxin</keyword>
<keyword id="KW-0964">Secreted</keyword>
<keyword id="KW-0732">Signal</keyword>
<keyword id="KW-0800">Toxin</keyword>
<keyword id="KW-1220">Voltage-gated potassium channel impairing toxin</keyword>
<organism>
    <name type="scientific">Scolopendra mutilans</name>
    <name type="common">Chinese red-headed centipede</name>
    <name type="synonym">Scolopendra subspinipes mutilans</name>
    <dbReference type="NCBI Taxonomy" id="2836329"/>
    <lineage>
        <taxon>Eukaryota</taxon>
        <taxon>Metazoa</taxon>
        <taxon>Ecdysozoa</taxon>
        <taxon>Arthropoda</taxon>
        <taxon>Myriapoda</taxon>
        <taxon>Chilopoda</taxon>
        <taxon>Pleurostigmophora</taxon>
        <taxon>Scolopendromorpha</taxon>
        <taxon>Scolopendridae</taxon>
        <taxon>Scolopendra</taxon>
    </lineage>
</organism>
<evidence type="ECO:0000269" key="1">
    <source>
    </source>
</evidence>
<evidence type="ECO:0000303" key="2">
    <source>
    </source>
</evidence>
<evidence type="ECO:0000303" key="3">
    <source>
    </source>
</evidence>
<evidence type="ECO:0000305" key="4"/>
<evidence type="ECO:0000305" key="5">
    <source>
    </source>
</evidence>
<evidence type="ECO:0007744" key="6">
    <source>
        <dbReference type="PDB" id="2M35"/>
    </source>
</evidence>
<evidence type="ECO:0007829" key="7">
    <source>
        <dbReference type="PDB" id="2M35"/>
    </source>
</evidence>
<protein>
    <recommendedName>
        <fullName evidence="3">Kappa-scoloptoxin(03)-Ssm1a</fullName>
        <shortName evidence="3">Kappa-SLPTX(03)-Ssm1a</shortName>
    </recommendedName>
    <alternativeName>
        <fullName evidence="2">Kappa-scoloptoxin-Ssm1a</fullName>
        <shortName evidence="2">Kappa-SLPTX-Ssm1a</shortName>
    </alternativeName>
</protein>
<dbReference type="EMBL" id="JN646114">
    <property type="protein sequence ID" value="AFM55003.1"/>
    <property type="molecule type" value="mRNA"/>
</dbReference>
<dbReference type="PDB" id="2M35">
    <property type="method" value="NMR"/>
    <property type="chains" value="A=24-74"/>
</dbReference>
<dbReference type="PDBsum" id="2M35"/>
<dbReference type="BMRB" id="I6RU32"/>
<dbReference type="SMR" id="I6RU32"/>
<dbReference type="TCDB" id="8.B.26.1.1">
    <property type="family name" value="the scorpion toxin, scoloptoxin (scoloptoxin) family"/>
</dbReference>
<dbReference type="GO" id="GO:0005576">
    <property type="term" value="C:extracellular region"/>
    <property type="evidence" value="ECO:0007669"/>
    <property type="project" value="UniProtKB-SubCell"/>
</dbReference>
<dbReference type="GO" id="GO:0015459">
    <property type="term" value="F:potassium channel regulator activity"/>
    <property type="evidence" value="ECO:0007669"/>
    <property type="project" value="UniProtKB-KW"/>
</dbReference>
<dbReference type="GO" id="GO:0090729">
    <property type="term" value="F:toxin activity"/>
    <property type="evidence" value="ECO:0007669"/>
    <property type="project" value="UniProtKB-KW"/>
</dbReference>
<dbReference type="Gene3D" id="1.10.60.50">
    <property type="match status" value="1"/>
</dbReference>
<comment type="function">
    <text evidence="1">This toxin inhibits voltage-gated potassium channel currents in DRG neurons (IC(50)=44.2 nM). In vivo, insects injected with this toxin showed signs of neurotoxicity including twitching, paralysis, and body contraction.</text>
</comment>
<comment type="subcellular location">
    <subcellularLocation>
        <location evidence="1">Secreted</location>
    </subcellularLocation>
</comment>
<comment type="tissue specificity">
    <text evidence="5">Expressed by the venom gland.</text>
</comment>
<comment type="mass spectrometry"/>
<comment type="toxic dose">
    <text evidence="1">the LD(50) ranges from 0.076 mg/kg in adult blowflies to 29.0 mg/kg in mealworms.</text>
</comment>
<comment type="similarity">
    <text evidence="4">Belongs to the scoloptoxin-03 family.</text>
</comment>
<proteinExistence type="evidence at protein level"/>
<reference key="1">
    <citation type="journal article" date="2012" name="Mol. Cell. Proteomics">
        <title>Chemical punch packed in venoms makes centipedes excellent predators.</title>
        <authorList>
            <person name="Yang S."/>
            <person name="Liu Z."/>
            <person name="Xiao Y."/>
            <person name="Li Y."/>
            <person name="Rong M."/>
            <person name="Liang S."/>
            <person name="Zhang Z."/>
            <person name="Yu H."/>
            <person name="King G.F."/>
            <person name="Lai R."/>
        </authorList>
    </citation>
    <scope>NUCLEOTIDE SEQUENCE [MRNA]</scope>
    <scope>PROTEIN SEQUENCE OF 24-74</scope>
    <scope>FUNCTION</scope>
    <scope>BIOASSAY</scope>
    <scope>DISULFIDE BONDS</scope>
    <scope>LETHAL DOSES</scope>
    <scope>MASS SPECTROMETRY</scope>
    <scope>SUBCELLULAR LOCATION</scope>
    <source>
        <tissue>Venom</tissue>
        <tissue>Venom gland</tissue>
    </source>
</reference>
<reference key="2">
    <citation type="journal article" date="2014" name="Mol. Biol. Evol.">
        <title>Clawing through evolution: toxin diversification and convergence in the ancient lineage Chilopoda (centipedes).</title>
        <authorList>
            <person name="Undheim E.A."/>
            <person name="Jones A."/>
            <person name="Clauser K.R."/>
            <person name="Holland J.W."/>
            <person name="Pineda S.S."/>
            <person name="King G.F."/>
            <person name="Fry B.G."/>
        </authorList>
    </citation>
    <scope>NOMENCLATURE</scope>
</reference>
<feature type="signal peptide" evidence="1">
    <location>
        <begin position="1"/>
        <end position="23"/>
    </location>
</feature>
<feature type="chain" id="PRO_0000425469" description="Kappa-scoloptoxin(03)-Ssm1a" evidence="1">
    <location>
        <begin position="24"/>
        <end position="74"/>
    </location>
</feature>
<feature type="disulfide bond" evidence="1 6">
    <location>
        <begin position="32"/>
        <end position="59"/>
    </location>
</feature>
<feature type="disulfide bond" evidence="1 6">
    <location>
        <begin position="42"/>
        <end position="58"/>
    </location>
</feature>
<feature type="disulfide bond" evidence="1 6">
    <location>
        <begin position="45"/>
        <end position="68"/>
    </location>
</feature>
<feature type="turn" evidence="7">
    <location>
        <begin position="27"/>
        <end position="29"/>
    </location>
</feature>
<feature type="turn" evidence="7">
    <location>
        <begin position="31"/>
        <end position="33"/>
    </location>
</feature>
<feature type="helix" evidence="7">
    <location>
        <begin position="36"/>
        <end position="49"/>
    </location>
</feature>
<feature type="helix" evidence="7">
    <location>
        <begin position="54"/>
        <end position="59"/>
    </location>
</feature>
<feature type="helix" evidence="7">
    <location>
        <begin position="62"/>
        <end position="72"/>
    </location>
</feature>
<name>TX31A_SCOMU</name>
<accession>I6RU32</accession>